<keyword id="KW-1283">Bacterial microcompartment</keyword>
<keyword id="KW-0846">Cobalamin</keyword>
<keyword id="KW-0170">Cobalt</keyword>
<keyword id="KW-0456">Lyase</keyword>
<dbReference type="EC" id="4.3.1.7" evidence="1"/>
<dbReference type="EMBL" id="CU928160">
    <property type="protein sequence ID" value="CAQ99337.1"/>
    <property type="molecule type" value="Genomic_DNA"/>
</dbReference>
<dbReference type="RefSeq" id="WP_000372364.1">
    <property type="nucleotide sequence ID" value="NC_011741.1"/>
</dbReference>
<dbReference type="SMR" id="B7M7E9"/>
<dbReference type="KEGG" id="ecr:ECIAI1_2497"/>
<dbReference type="HOGENOM" id="CLU_068224_0_0_6"/>
<dbReference type="UniPathway" id="UPA00560"/>
<dbReference type="GO" id="GO:0009350">
    <property type="term" value="C:ethanolamine ammonia-lyase complex"/>
    <property type="evidence" value="ECO:0007669"/>
    <property type="project" value="UniProtKB-UniRule"/>
</dbReference>
<dbReference type="GO" id="GO:0031471">
    <property type="term" value="C:ethanolamine degradation polyhedral organelle"/>
    <property type="evidence" value="ECO:0007669"/>
    <property type="project" value="UniProtKB-UniRule"/>
</dbReference>
<dbReference type="GO" id="GO:0031419">
    <property type="term" value="F:cobalamin binding"/>
    <property type="evidence" value="ECO:0007669"/>
    <property type="project" value="UniProtKB-UniRule"/>
</dbReference>
<dbReference type="GO" id="GO:0008851">
    <property type="term" value="F:ethanolamine ammonia-lyase activity"/>
    <property type="evidence" value="ECO:0007669"/>
    <property type="project" value="UniProtKB-UniRule"/>
</dbReference>
<dbReference type="GO" id="GO:0006520">
    <property type="term" value="P:amino acid metabolic process"/>
    <property type="evidence" value="ECO:0007669"/>
    <property type="project" value="InterPro"/>
</dbReference>
<dbReference type="GO" id="GO:0046336">
    <property type="term" value="P:ethanolamine catabolic process"/>
    <property type="evidence" value="ECO:0007669"/>
    <property type="project" value="UniProtKB-UniRule"/>
</dbReference>
<dbReference type="FunFam" id="3.40.50.11240:FF:000001">
    <property type="entry name" value="Ethanolamine ammonia-lyase light chain"/>
    <property type="match status" value="1"/>
</dbReference>
<dbReference type="Gene3D" id="6.10.140.690">
    <property type="match status" value="1"/>
</dbReference>
<dbReference type="Gene3D" id="6.10.250.2060">
    <property type="match status" value="1"/>
</dbReference>
<dbReference type="Gene3D" id="3.40.50.11240">
    <property type="entry name" value="Ethanolamine ammonia-lyase light chain (EutC)"/>
    <property type="match status" value="1"/>
</dbReference>
<dbReference type="HAMAP" id="MF_00601">
    <property type="entry name" value="EutC"/>
    <property type="match status" value="1"/>
</dbReference>
<dbReference type="InterPro" id="IPR009246">
    <property type="entry name" value="EutC"/>
</dbReference>
<dbReference type="InterPro" id="IPR042251">
    <property type="entry name" value="EutC_C"/>
</dbReference>
<dbReference type="NCBIfam" id="NF003971">
    <property type="entry name" value="PRK05465.1"/>
    <property type="match status" value="1"/>
</dbReference>
<dbReference type="PANTHER" id="PTHR39330">
    <property type="entry name" value="ETHANOLAMINE AMMONIA-LYASE LIGHT CHAIN"/>
    <property type="match status" value="1"/>
</dbReference>
<dbReference type="PANTHER" id="PTHR39330:SF1">
    <property type="entry name" value="ETHANOLAMINE AMMONIA-LYASE SMALL SUBUNIT"/>
    <property type="match status" value="1"/>
</dbReference>
<dbReference type="Pfam" id="PF05985">
    <property type="entry name" value="EutC"/>
    <property type="match status" value="1"/>
</dbReference>
<dbReference type="PIRSF" id="PIRSF018982">
    <property type="entry name" value="EutC"/>
    <property type="match status" value="1"/>
</dbReference>
<accession>B7M7E9</accession>
<sequence>MDQKQIEEIVRSVMASMGQTAPAPSEAKCATTNCAAPVTSESCALDLGSAEAKAWIGVENPHRADVLTELRRSTVARVCTGRAGPRPRTQALLRFLADHSRSKDTVLKEVPEEWVKAQGLLEVRSEISDKNLYLTRPDMGRRLCAEAVEALKAQCVANPDVQVVISDGLSTDAITVNYEEILPPLMAGLKQAGLKVGTPFFVRYGRVKIEDQIGEILGAKVVILLVGERPGLGQSESLSCYAVYSPRMATTVEADRTCISNIHQGGTPPVEAAAVIVDLAKRMLEQKASGINMTR</sequence>
<feature type="chain" id="PRO_1000130088" description="Ethanolamine ammonia-lyase small subunit">
    <location>
        <begin position="1"/>
        <end position="295"/>
    </location>
</feature>
<feature type="binding site" evidence="1">
    <location>
        <position position="207"/>
    </location>
    <ligand>
        <name>adenosylcob(III)alamin</name>
        <dbReference type="ChEBI" id="CHEBI:18408"/>
    </ligand>
</feature>
<feature type="binding site" evidence="1">
    <location>
        <position position="228"/>
    </location>
    <ligand>
        <name>adenosylcob(III)alamin</name>
        <dbReference type="ChEBI" id="CHEBI:18408"/>
    </ligand>
</feature>
<feature type="binding site" evidence="1">
    <location>
        <position position="258"/>
    </location>
    <ligand>
        <name>adenosylcob(III)alamin</name>
        <dbReference type="ChEBI" id="CHEBI:18408"/>
    </ligand>
</feature>
<comment type="function">
    <text evidence="1">Catalyzes the deamination of various vicinal amino-alcohols to oxo compounds. Allows this organism to utilize ethanolamine as the sole source of nitrogen and carbon in the presence of external vitamin B12.</text>
</comment>
<comment type="catalytic activity">
    <reaction evidence="1">
        <text>ethanolamine = acetaldehyde + NH4(+)</text>
        <dbReference type="Rhea" id="RHEA:15313"/>
        <dbReference type="ChEBI" id="CHEBI:15343"/>
        <dbReference type="ChEBI" id="CHEBI:28938"/>
        <dbReference type="ChEBI" id="CHEBI:57603"/>
        <dbReference type="EC" id="4.3.1.7"/>
    </reaction>
</comment>
<comment type="cofactor">
    <cofactor evidence="1">
        <name>adenosylcob(III)alamin</name>
        <dbReference type="ChEBI" id="CHEBI:18408"/>
    </cofactor>
    <text evidence="1">Binds between the large and small subunits.</text>
</comment>
<comment type="pathway">
    <text evidence="1">Amine and polyamine degradation; ethanolamine degradation.</text>
</comment>
<comment type="subunit">
    <text evidence="1">The basic unit is a heterodimer which dimerizes to form tetramers. The heterotetramers trimerize; 6 large subunits form a core ring with 6 small subunits projecting outwards.</text>
</comment>
<comment type="subcellular location">
    <subcellularLocation>
        <location evidence="1">Bacterial microcompartment</location>
    </subcellularLocation>
</comment>
<comment type="similarity">
    <text evidence="1">Belongs to the EutC family.</text>
</comment>
<organism>
    <name type="scientific">Escherichia coli O8 (strain IAI1)</name>
    <dbReference type="NCBI Taxonomy" id="585034"/>
    <lineage>
        <taxon>Bacteria</taxon>
        <taxon>Pseudomonadati</taxon>
        <taxon>Pseudomonadota</taxon>
        <taxon>Gammaproteobacteria</taxon>
        <taxon>Enterobacterales</taxon>
        <taxon>Enterobacteriaceae</taxon>
        <taxon>Escherichia</taxon>
    </lineage>
</organism>
<reference key="1">
    <citation type="journal article" date="2009" name="PLoS Genet.">
        <title>Organised genome dynamics in the Escherichia coli species results in highly diverse adaptive paths.</title>
        <authorList>
            <person name="Touchon M."/>
            <person name="Hoede C."/>
            <person name="Tenaillon O."/>
            <person name="Barbe V."/>
            <person name="Baeriswyl S."/>
            <person name="Bidet P."/>
            <person name="Bingen E."/>
            <person name="Bonacorsi S."/>
            <person name="Bouchier C."/>
            <person name="Bouvet O."/>
            <person name="Calteau A."/>
            <person name="Chiapello H."/>
            <person name="Clermont O."/>
            <person name="Cruveiller S."/>
            <person name="Danchin A."/>
            <person name="Diard M."/>
            <person name="Dossat C."/>
            <person name="Karoui M.E."/>
            <person name="Frapy E."/>
            <person name="Garry L."/>
            <person name="Ghigo J.M."/>
            <person name="Gilles A.M."/>
            <person name="Johnson J."/>
            <person name="Le Bouguenec C."/>
            <person name="Lescat M."/>
            <person name="Mangenot S."/>
            <person name="Martinez-Jehanne V."/>
            <person name="Matic I."/>
            <person name="Nassif X."/>
            <person name="Oztas S."/>
            <person name="Petit M.A."/>
            <person name="Pichon C."/>
            <person name="Rouy Z."/>
            <person name="Ruf C.S."/>
            <person name="Schneider D."/>
            <person name="Tourret J."/>
            <person name="Vacherie B."/>
            <person name="Vallenet D."/>
            <person name="Medigue C."/>
            <person name="Rocha E.P.C."/>
            <person name="Denamur E."/>
        </authorList>
    </citation>
    <scope>NUCLEOTIDE SEQUENCE [LARGE SCALE GENOMIC DNA]</scope>
    <source>
        <strain>IAI1</strain>
    </source>
</reference>
<proteinExistence type="inferred from homology"/>
<name>EUTC_ECO8A</name>
<gene>
    <name evidence="1" type="primary">eutC</name>
    <name type="ordered locus">ECIAI1_2497</name>
</gene>
<protein>
    <recommendedName>
        <fullName evidence="1">Ethanolamine ammonia-lyase small subunit</fullName>
        <shortName evidence="1">EAL small subunit</shortName>
        <ecNumber evidence="1">4.3.1.7</ecNumber>
    </recommendedName>
</protein>
<evidence type="ECO:0000255" key="1">
    <source>
        <dbReference type="HAMAP-Rule" id="MF_00601"/>
    </source>
</evidence>